<keyword id="KW-0235">DNA replication</keyword>
<keyword id="KW-0238">DNA-binding</keyword>
<keyword id="KW-0639">Primosome</keyword>
<keyword id="KW-1185">Reference proteome</keyword>
<name>DNAT_ECO57</name>
<reference key="1">
    <citation type="journal article" date="2001" name="Nature">
        <title>Genome sequence of enterohaemorrhagic Escherichia coli O157:H7.</title>
        <authorList>
            <person name="Perna N.T."/>
            <person name="Plunkett G. III"/>
            <person name="Burland V."/>
            <person name="Mau B."/>
            <person name="Glasner J.D."/>
            <person name="Rose D.J."/>
            <person name="Mayhew G.F."/>
            <person name="Evans P.S."/>
            <person name="Gregor J."/>
            <person name="Kirkpatrick H.A."/>
            <person name="Posfai G."/>
            <person name="Hackett J."/>
            <person name="Klink S."/>
            <person name="Boutin A."/>
            <person name="Shao Y."/>
            <person name="Miller L."/>
            <person name="Grotbeck E.J."/>
            <person name="Davis N.W."/>
            <person name="Lim A."/>
            <person name="Dimalanta E.T."/>
            <person name="Potamousis K."/>
            <person name="Apodaca J."/>
            <person name="Anantharaman T.S."/>
            <person name="Lin J."/>
            <person name="Yen G."/>
            <person name="Schwartz D.C."/>
            <person name="Welch R.A."/>
            <person name="Blattner F.R."/>
        </authorList>
    </citation>
    <scope>NUCLEOTIDE SEQUENCE [LARGE SCALE GENOMIC DNA]</scope>
    <source>
        <strain>O157:H7 / EDL933 / ATCC 700927 / EHEC</strain>
    </source>
</reference>
<reference key="2">
    <citation type="journal article" date="2001" name="DNA Res.">
        <title>Complete genome sequence of enterohemorrhagic Escherichia coli O157:H7 and genomic comparison with a laboratory strain K-12.</title>
        <authorList>
            <person name="Hayashi T."/>
            <person name="Makino K."/>
            <person name="Ohnishi M."/>
            <person name="Kurokawa K."/>
            <person name="Ishii K."/>
            <person name="Yokoyama K."/>
            <person name="Han C.-G."/>
            <person name="Ohtsubo E."/>
            <person name="Nakayama K."/>
            <person name="Murata T."/>
            <person name="Tanaka M."/>
            <person name="Tobe T."/>
            <person name="Iida T."/>
            <person name="Takami H."/>
            <person name="Honda T."/>
            <person name="Sasakawa C."/>
            <person name="Ogasawara N."/>
            <person name="Yasunaga T."/>
            <person name="Kuhara S."/>
            <person name="Shiba T."/>
            <person name="Hattori M."/>
            <person name="Shinagawa H."/>
        </authorList>
    </citation>
    <scope>NUCLEOTIDE SEQUENCE [LARGE SCALE GENOMIC DNA]</scope>
    <source>
        <strain>O157:H7 / Sakai / RIMD 0509952 / EHEC</strain>
    </source>
</reference>
<organism>
    <name type="scientific">Escherichia coli O157:H7</name>
    <dbReference type="NCBI Taxonomy" id="83334"/>
    <lineage>
        <taxon>Bacteria</taxon>
        <taxon>Pseudomonadati</taxon>
        <taxon>Pseudomonadota</taxon>
        <taxon>Gammaproteobacteria</taxon>
        <taxon>Enterobacterales</taxon>
        <taxon>Enterobacteriaceae</taxon>
        <taxon>Escherichia</taxon>
    </lineage>
</organism>
<feature type="initiator methionine" description="Removed" evidence="1">
    <location>
        <position position="1"/>
    </location>
</feature>
<feature type="chain" id="PRO_0000199870" description="Replication restart protein DnaT">
    <location>
        <begin position="2"/>
        <end position="179"/>
    </location>
</feature>
<feature type="region of interest" description="Disordered" evidence="3">
    <location>
        <begin position="156"/>
        <end position="179"/>
    </location>
</feature>
<gene>
    <name evidence="2" type="primary">dnaT</name>
    <name type="ordered locus">Z5962</name>
    <name type="ordered locus">ECs5322</name>
</gene>
<sequence length="179" mass="19499">MSSRVLTPDVVGIDALVHDHQTVLAKAEGGVVAVFANNAPAFYAVTPARLAELLALEEKLARPGSDVDLDDQLYQEPQAAPVAVPMGKFAMYPDWQPDADFIRLAALWGVALREPVTTEELASFIAYWQAEGKVFHHVQWQQKLARSLQIGRASNGGLPKRDVNTVSEPDSQIPPGFRG</sequence>
<dbReference type="EMBL" id="AE005174">
    <property type="protein sequence ID" value="AAG59545.1"/>
    <property type="molecule type" value="Genomic_DNA"/>
</dbReference>
<dbReference type="EMBL" id="BA000007">
    <property type="protein sequence ID" value="BAB38745.1"/>
    <property type="molecule type" value="Genomic_DNA"/>
</dbReference>
<dbReference type="PIR" id="B91294">
    <property type="entry name" value="B91294"/>
</dbReference>
<dbReference type="PIR" id="E86135">
    <property type="entry name" value="E86135"/>
</dbReference>
<dbReference type="RefSeq" id="WP_000098821.1">
    <property type="nucleotide sequence ID" value="NZ_VOAI01000002.1"/>
</dbReference>
<dbReference type="SMR" id="Q8XB55"/>
<dbReference type="STRING" id="155864.Z5962"/>
<dbReference type="KEGG" id="ece:Z5962"/>
<dbReference type="KEGG" id="ecs:ECs_5322"/>
<dbReference type="PATRIC" id="fig|386585.9.peg.5566"/>
<dbReference type="eggNOG" id="ENOG502Z8PW">
    <property type="taxonomic scope" value="Bacteria"/>
</dbReference>
<dbReference type="HOGENOM" id="CLU_1501592_0_0_6"/>
<dbReference type="OMA" id="SFVAYWQ"/>
<dbReference type="Proteomes" id="UP000000558">
    <property type="component" value="Chromosome"/>
</dbReference>
<dbReference type="Proteomes" id="UP000002519">
    <property type="component" value="Chromosome"/>
</dbReference>
<dbReference type="GO" id="GO:1990077">
    <property type="term" value="C:primosome complex"/>
    <property type="evidence" value="ECO:0007669"/>
    <property type="project" value="UniProtKB-KW"/>
</dbReference>
<dbReference type="GO" id="GO:0006269">
    <property type="term" value="P:DNA replication, synthesis of primer"/>
    <property type="evidence" value="ECO:0007669"/>
    <property type="project" value="UniProtKB-UniRule"/>
</dbReference>
<dbReference type="FunFam" id="1.10.8.1180:FF:000001">
    <property type="entry name" value="Primosomal protein 1"/>
    <property type="match status" value="1"/>
</dbReference>
<dbReference type="Gene3D" id="1.10.8.1180">
    <property type="match status" value="1"/>
</dbReference>
<dbReference type="HAMAP" id="MF_01061">
    <property type="entry name" value="DnaT"/>
    <property type="match status" value="1"/>
</dbReference>
<dbReference type="InterPro" id="IPR020917">
    <property type="entry name" value="DnaT"/>
</dbReference>
<dbReference type="InterPro" id="IPR040480">
    <property type="entry name" value="DnaT_DNA_bind"/>
</dbReference>
<dbReference type="NCBIfam" id="NF002770">
    <property type="entry name" value="PRK02854.1"/>
    <property type="match status" value="1"/>
</dbReference>
<dbReference type="Pfam" id="PF17948">
    <property type="entry name" value="DnaT"/>
    <property type="match status" value="1"/>
</dbReference>
<evidence type="ECO:0000250" key="1"/>
<evidence type="ECO:0000255" key="2">
    <source>
        <dbReference type="HAMAP-Rule" id="MF_01061"/>
    </source>
</evidence>
<evidence type="ECO:0000256" key="3">
    <source>
        <dbReference type="SAM" id="MobiDB-lite"/>
    </source>
</evidence>
<accession>Q8XB55</accession>
<comment type="function">
    <text evidence="2">Involved in the restart of stalled replication forks, which reloads the replicative helicase on sites other than the origin of replication. Can function in multiple replication restart pathways. Displaces ssDNA from a PriB-ssDNA complex. Probably forms a spiral filament on ssDNA.</text>
</comment>
<comment type="subunit">
    <text evidence="2">Homooligomerizes. Interacts with PriB. Component of the replication restart primosome. Primosome assembly occurs via a 'hand-off' mechanism. PriA binds to replication forks, subsequently PriB then DnaT bind; DnaT then displaces ssDNA to generate the helicase loading substrate.</text>
</comment>
<comment type="similarity">
    <text evidence="2">Belongs to the DnaT family.</text>
</comment>
<proteinExistence type="inferred from homology"/>
<protein>
    <recommendedName>
        <fullName evidence="2">Replication restart protein DnaT</fullName>
    </recommendedName>
</protein>